<sequence length="81" mass="8899">MSHSVKIYDTCIGCTQCVRACPTDVLEMIPWDGCKAKQIASAPRTEDCVGCKRCESACPTDFLSVRVYLGPETTRSMALSY</sequence>
<keyword id="KW-0004">4Fe-4S</keyword>
<keyword id="KW-0150">Chloroplast</keyword>
<keyword id="KW-0249">Electron transport</keyword>
<keyword id="KW-0408">Iron</keyword>
<keyword id="KW-0411">Iron-sulfur</keyword>
<keyword id="KW-0472">Membrane</keyword>
<keyword id="KW-0479">Metal-binding</keyword>
<keyword id="KW-0560">Oxidoreductase</keyword>
<keyword id="KW-0602">Photosynthesis</keyword>
<keyword id="KW-0603">Photosystem I</keyword>
<keyword id="KW-0934">Plastid</keyword>
<keyword id="KW-0677">Repeat</keyword>
<keyword id="KW-0793">Thylakoid</keyword>
<keyword id="KW-0813">Transport</keyword>
<proteinExistence type="inferred from homology"/>
<name>PSAC_AEGTA</name>
<feature type="initiator methionine" description="Removed" evidence="1">
    <location>
        <position position="1"/>
    </location>
</feature>
<feature type="chain" id="PRO_0000292110" description="Photosystem I iron-sulfur center">
    <location>
        <begin position="2"/>
        <end position="81"/>
    </location>
</feature>
<feature type="domain" description="4Fe-4S ferredoxin-type 1" evidence="2">
    <location>
        <begin position="2"/>
        <end position="31"/>
    </location>
</feature>
<feature type="domain" description="4Fe-4S ferredoxin-type 2" evidence="2">
    <location>
        <begin position="39"/>
        <end position="68"/>
    </location>
</feature>
<feature type="binding site" evidence="2">
    <location>
        <position position="11"/>
    </location>
    <ligand>
        <name>[4Fe-4S] cluster</name>
        <dbReference type="ChEBI" id="CHEBI:49883"/>
        <label>1</label>
    </ligand>
</feature>
<feature type="binding site" evidence="2">
    <location>
        <position position="14"/>
    </location>
    <ligand>
        <name>[4Fe-4S] cluster</name>
        <dbReference type="ChEBI" id="CHEBI:49883"/>
        <label>1</label>
    </ligand>
</feature>
<feature type="binding site" evidence="2">
    <location>
        <position position="17"/>
    </location>
    <ligand>
        <name>[4Fe-4S] cluster</name>
        <dbReference type="ChEBI" id="CHEBI:49883"/>
        <label>1</label>
    </ligand>
</feature>
<feature type="binding site" evidence="2">
    <location>
        <position position="21"/>
    </location>
    <ligand>
        <name>[4Fe-4S] cluster</name>
        <dbReference type="ChEBI" id="CHEBI:49883"/>
        <label>2</label>
    </ligand>
</feature>
<feature type="binding site" evidence="2">
    <location>
        <position position="48"/>
    </location>
    <ligand>
        <name>[4Fe-4S] cluster</name>
        <dbReference type="ChEBI" id="CHEBI:49883"/>
        <label>2</label>
    </ligand>
</feature>
<feature type="binding site" evidence="2">
    <location>
        <position position="51"/>
    </location>
    <ligand>
        <name>[4Fe-4S] cluster</name>
        <dbReference type="ChEBI" id="CHEBI:49883"/>
        <label>2</label>
    </ligand>
</feature>
<feature type="binding site" evidence="2">
    <location>
        <position position="54"/>
    </location>
    <ligand>
        <name>[4Fe-4S] cluster</name>
        <dbReference type="ChEBI" id="CHEBI:49883"/>
        <label>2</label>
    </ligand>
</feature>
<feature type="binding site" evidence="2">
    <location>
        <position position="58"/>
    </location>
    <ligand>
        <name>[4Fe-4S] cluster</name>
        <dbReference type="ChEBI" id="CHEBI:49883"/>
        <label>1</label>
    </ligand>
</feature>
<gene>
    <name evidence="2" type="primary">psaC</name>
</gene>
<dbReference type="EC" id="1.97.1.12" evidence="2"/>
<dbReference type="EMBL" id="EF137807">
    <property type="protein sequence ID" value="ABL95198.1"/>
    <property type="molecule type" value="Genomic_DNA"/>
</dbReference>
<dbReference type="RefSeq" id="YP_008474354.1">
    <property type="nucleotide sequence ID" value="NC_022133.1"/>
</dbReference>
<dbReference type="SMR" id="A1YV25"/>
<dbReference type="GeneID" id="16693698"/>
<dbReference type="OMA" id="GHMSHAV"/>
<dbReference type="GO" id="GO:0009535">
    <property type="term" value="C:chloroplast thylakoid membrane"/>
    <property type="evidence" value="ECO:0007669"/>
    <property type="project" value="UniProtKB-SubCell"/>
</dbReference>
<dbReference type="GO" id="GO:0009522">
    <property type="term" value="C:photosystem I"/>
    <property type="evidence" value="ECO:0007669"/>
    <property type="project" value="UniProtKB-KW"/>
</dbReference>
<dbReference type="GO" id="GO:0051539">
    <property type="term" value="F:4 iron, 4 sulfur cluster binding"/>
    <property type="evidence" value="ECO:0007669"/>
    <property type="project" value="UniProtKB-KW"/>
</dbReference>
<dbReference type="GO" id="GO:0009055">
    <property type="term" value="F:electron transfer activity"/>
    <property type="evidence" value="ECO:0007669"/>
    <property type="project" value="UniProtKB-UniRule"/>
</dbReference>
<dbReference type="GO" id="GO:0046872">
    <property type="term" value="F:metal ion binding"/>
    <property type="evidence" value="ECO:0007669"/>
    <property type="project" value="UniProtKB-KW"/>
</dbReference>
<dbReference type="GO" id="GO:0016491">
    <property type="term" value="F:oxidoreductase activity"/>
    <property type="evidence" value="ECO:0007669"/>
    <property type="project" value="UniProtKB-KW"/>
</dbReference>
<dbReference type="GO" id="GO:0009773">
    <property type="term" value="P:photosynthetic electron transport in photosystem I"/>
    <property type="evidence" value="ECO:0007669"/>
    <property type="project" value="InterPro"/>
</dbReference>
<dbReference type="FunFam" id="3.30.70.20:FF:000001">
    <property type="entry name" value="Photosystem I iron-sulfur center"/>
    <property type="match status" value="1"/>
</dbReference>
<dbReference type="Gene3D" id="3.30.70.20">
    <property type="match status" value="1"/>
</dbReference>
<dbReference type="HAMAP" id="MF_01303">
    <property type="entry name" value="PSI_PsaC"/>
    <property type="match status" value="1"/>
</dbReference>
<dbReference type="InterPro" id="IPR017896">
    <property type="entry name" value="4Fe4S_Fe-S-bd"/>
</dbReference>
<dbReference type="InterPro" id="IPR017900">
    <property type="entry name" value="4Fe4S_Fe_S_CS"/>
</dbReference>
<dbReference type="InterPro" id="IPR050157">
    <property type="entry name" value="PSI_iron-sulfur_center"/>
</dbReference>
<dbReference type="InterPro" id="IPR017491">
    <property type="entry name" value="PSI_PsaC"/>
</dbReference>
<dbReference type="NCBIfam" id="TIGR03048">
    <property type="entry name" value="PS_I_psaC"/>
    <property type="match status" value="1"/>
</dbReference>
<dbReference type="PANTHER" id="PTHR24960:SF79">
    <property type="entry name" value="PHOTOSYSTEM I IRON-SULFUR CENTER"/>
    <property type="match status" value="1"/>
</dbReference>
<dbReference type="PANTHER" id="PTHR24960">
    <property type="entry name" value="PHOTOSYSTEM I IRON-SULFUR CENTER-RELATED"/>
    <property type="match status" value="1"/>
</dbReference>
<dbReference type="Pfam" id="PF12838">
    <property type="entry name" value="Fer4_7"/>
    <property type="match status" value="1"/>
</dbReference>
<dbReference type="SUPFAM" id="SSF54862">
    <property type="entry name" value="4Fe-4S ferredoxins"/>
    <property type="match status" value="1"/>
</dbReference>
<dbReference type="PROSITE" id="PS00198">
    <property type="entry name" value="4FE4S_FER_1"/>
    <property type="match status" value="2"/>
</dbReference>
<dbReference type="PROSITE" id="PS51379">
    <property type="entry name" value="4FE4S_FER_2"/>
    <property type="match status" value="2"/>
</dbReference>
<geneLocation type="chloroplast"/>
<evidence type="ECO:0000250" key="1"/>
<evidence type="ECO:0000255" key="2">
    <source>
        <dbReference type="HAMAP-Rule" id="MF_01303"/>
    </source>
</evidence>
<protein>
    <recommendedName>
        <fullName evidence="2">Photosystem I iron-sulfur center</fullName>
        <ecNumber evidence="2">1.97.1.12</ecNumber>
    </recommendedName>
    <alternativeName>
        <fullName evidence="2">9 kDa polypeptide</fullName>
    </alternativeName>
    <alternativeName>
        <fullName evidence="2">PSI-C</fullName>
    </alternativeName>
    <alternativeName>
        <fullName evidence="2">Photosystem I subunit VII</fullName>
    </alternativeName>
    <alternativeName>
        <fullName evidence="2">PsaC</fullName>
    </alternativeName>
</protein>
<comment type="function">
    <text evidence="2">Apoprotein for the two 4Fe-4S centers FA and FB of photosystem I (PSI); essential for photochemical activity. FB is the terminal electron acceptor of PSI, donating electrons to ferredoxin. The C-terminus interacts with PsaA/B/D and helps assemble the protein into the PSI complex. Required for binding of PsaD and PsaE to PSI. PSI is a plastocyanin-ferredoxin oxidoreductase, converting photonic excitation into a charge separation, which transfers an electron from the donor P700 chlorophyll pair to the spectroscopically characterized acceptors A0, A1, FX, FA and FB in turn.</text>
</comment>
<comment type="catalytic activity">
    <reaction evidence="2">
        <text>reduced [plastocyanin] + hnu + oxidized [2Fe-2S]-[ferredoxin] = oxidized [plastocyanin] + reduced [2Fe-2S]-[ferredoxin]</text>
        <dbReference type="Rhea" id="RHEA:30407"/>
        <dbReference type="Rhea" id="RHEA-COMP:10000"/>
        <dbReference type="Rhea" id="RHEA-COMP:10001"/>
        <dbReference type="Rhea" id="RHEA-COMP:10039"/>
        <dbReference type="Rhea" id="RHEA-COMP:10040"/>
        <dbReference type="ChEBI" id="CHEBI:29036"/>
        <dbReference type="ChEBI" id="CHEBI:30212"/>
        <dbReference type="ChEBI" id="CHEBI:33737"/>
        <dbReference type="ChEBI" id="CHEBI:33738"/>
        <dbReference type="ChEBI" id="CHEBI:49552"/>
        <dbReference type="EC" id="1.97.1.12"/>
    </reaction>
</comment>
<comment type="cofactor">
    <cofactor evidence="2">
        <name>[4Fe-4S] cluster</name>
        <dbReference type="ChEBI" id="CHEBI:49883"/>
    </cofactor>
    <text evidence="2">Binds 2 [4Fe-4S] clusters. Cluster 2 is most probably the spectroscopically characterized electron acceptor FA and cluster 1 is most probably FB.</text>
</comment>
<comment type="subunit">
    <text evidence="2">The eukaryotic PSI reaction center is composed of at least 11 subunits.</text>
</comment>
<comment type="subcellular location">
    <subcellularLocation>
        <location evidence="2">Plastid</location>
        <location evidence="2">Chloroplast thylakoid membrane</location>
        <topology evidence="2">Peripheral membrane protein</topology>
        <orientation evidence="2">Stromal side</orientation>
    </subcellularLocation>
</comment>
<reference key="1">
    <citation type="submission" date="2006-11" db="EMBL/GenBank/DDBJ databases">
        <title>Sequence variation of chloroplast psaC gene region occurred in some Triticeae species.</title>
        <authorList>
            <person name="Ning S."/>
            <person name="Chen Q."/>
            <person name="Yuan Z."/>
            <person name="Zhang L."/>
            <person name="Liu D."/>
        </authorList>
    </citation>
    <scope>NUCLEOTIDE SEQUENCE [GENOMIC DNA]</scope>
</reference>
<organism>
    <name type="scientific">Aegilops tauschii</name>
    <name type="common">Tausch's goatgrass</name>
    <name type="synonym">Aegilops squarrosa</name>
    <dbReference type="NCBI Taxonomy" id="37682"/>
    <lineage>
        <taxon>Eukaryota</taxon>
        <taxon>Viridiplantae</taxon>
        <taxon>Streptophyta</taxon>
        <taxon>Embryophyta</taxon>
        <taxon>Tracheophyta</taxon>
        <taxon>Spermatophyta</taxon>
        <taxon>Magnoliopsida</taxon>
        <taxon>Liliopsida</taxon>
        <taxon>Poales</taxon>
        <taxon>Poaceae</taxon>
        <taxon>BOP clade</taxon>
        <taxon>Pooideae</taxon>
        <taxon>Triticodae</taxon>
        <taxon>Triticeae</taxon>
        <taxon>Triticinae</taxon>
        <taxon>Aegilops</taxon>
    </lineage>
</organism>
<accession>A1YV25</accession>